<dbReference type="EMBL" id="BA000040">
    <property type="protein sequence ID" value="BAC53363.1"/>
    <property type="molecule type" value="Genomic_DNA"/>
</dbReference>
<dbReference type="RefSeq" id="NP_774738.1">
    <property type="nucleotide sequence ID" value="NC_004463.1"/>
</dbReference>
<dbReference type="SMR" id="Q89BQ0"/>
<dbReference type="FunCoup" id="Q89BQ0">
    <property type="interactions" value="343"/>
</dbReference>
<dbReference type="STRING" id="224911.AAV28_38185"/>
<dbReference type="EnsemblBacteria" id="BAC53363">
    <property type="protein sequence ID" value="BAC53363"/>
    <property type="gene ID" value="BAC53363"/>
</dbReference>
<dbReference type="KEGG" id="bja:blr8098"/>
<dbReference type="PATRIC" id="fig|224911.5.peg.8333"/>
<dbReference type="eggNOG" id="COG0706">
    <property type="taxonomic scope" value="Bacteria"/>
</dbReference>
<dbReference type="HOGENOM" id="CLU_016535_1_0_5"/>
<dbReference type="InParanoid" id="Q89BQ0"/>
<dbReference type="OrthoDB" id="9780552at2"/>
<dbReference type="PhylomeDB" id="Q89BQ0"/>
<dbReference type="Proteomes" id="UP000002526">
    <property type="component" value="Chromosome"/>
</dbReference>
<dbReference type="GO" id="GO:0005886">
    <property type="term" value="C:plasma membrane"/>
    <property type="evidence" value="ECO:0000318"/>
    <property type="project" value="GO_Central"/>
</dbReference>
<dbReference type="GO" id="GO:0032977">
    <property type="term" value="F:membrane insertase activity"/>
    <property type="evidence" value="ECO:0000318"/>
    <property type="project" value="GO_Central"/>
</dbReference>
<dbReference type="GO" id="GO:0051205">
    <property type="term" value="P:protein insertion into membrane"/>
    <property type="evidence" value="ECO:0000318"/>
    <property type="project" value="GO_Central"/>
</dbReference>
<dbReference type="GO" id="GO:0015031">
    <property type="term" value="P:protein transport"/>
    <property type="evidence" value="ECO:0007669"/>
    <property type="project" value="UniProtKB-KW"/>
</dbReference>
<dbReference type="CDD" id="cd20070">
    <property type="entry name" value="5TM_YidC_Alb3"/>
    <property type="match status" value="1"/>
</dbReference>
<dbReference type="CDD" id="cd19961">
    <property type="entry name" value="EcYidC-like_peri"/>
    <property type="match status" value="1"/>
</dbReference>
<dbReference type="FunFam" id="2.70.98.90:FF:000006">
    <property type="entry name" value="Membrane protein insertase YidC"/>
    <property type="match status" value="1"/>
</dbReference>
<dbReference type="Gene3D" id="2.70.98.90">
    <property type="match status" value="1"/>
</dbReference>
<dbReference type="HAMAP" id="MF_01810">
    <property type="entry name" value="YidC_type1"/>
    <property type="match status" value="1"/>
</dbReference>
<dbReference type="InterPro" id="IPR019998">
    <property type="entry name" value="Membr_insert_YidC"/>
</dbReference>
<dbReference type="InterPro" id="IPR028053">
    <property type="entry name" value="Membr_insert_YidC_N"/>
</dbReference>
<dbReference type="InterPro" id="IPR001708">
    <property type="entry name" value="YidC/ALB3/OXA1/COX18"/>
</dbReference>
<dbReference type="InterPro" id="IPR028055">
    <property type="entry name" value="YidC/Oxa/ALB_C"/>
</dbReference>
<dbReference type="InterPro" id="IPR047196">
    <property type="entry name" value="YidC_ALB_C"/>
</dbReference>
<dbReference type="InterPro" id="IPR038221">
    <property type="entry name" value="YidC_periplasmic_sf"/>
</dbReference>
<dbReference type="NCBIfam" id="NF002353">
    <property type="entry name" value="PRK01318.1-4"/>
    <property type="match status" value="1"/>
</dbReference>
<dbReference type="NCBIfam" id="TIGR03593">
    <property type="entry name" value="yidC_nterm"/>
    <property type="match status" value="1"/>
</dbReference>
<dbReference type="NCBIfam" id="TIGR03592">
    <property type="entry name" value="yidC_oxa1_cterm"/>
    <property type="match status" value="1"/>
</dbReference>
<dbReference type="PANTHER" id="PTHR12428:SF65">
    <property type="entry name" value="CYTOCHROME C OXIDASE ASSEMBLY PROTEIN COX18, MITOCHONDRIAL"/>
    <property type="match status" value="1"/>
</dbReference>
<dbReference type="PANTHER" id="PTHR12428">
    <property type="entry name" value="OXA1"/>
    <property type="match status" value="1"/>
</dbReference>
<dbReference type="Pfam" id="PF02096">
    <property type="entry name" value="60KD_IMP"/>
    <property type="match status" value="1"/>
</dbReference>
<dbReference type="Pfam" id="PF14849">
    <property type="entry name" value="YidC_periplas"/>
    <property type="match status" value="1"/>
</dbReference>
<dbReference type="PRINTS" id="PR00701">
    <property type="entry name" value="60KDINNERMP"/>
</dbReference>
<dbReference type="PRINTS" id="PR01900">
    <property type="entry name" value="YIDCPROTEIN"/>
</dbReference>
<proteinExistence type="inferred from homology"/>
<comment type="function">
    <text evidence="1">Required for the insertion and/or proper folding and/or complex formation of integral membrane proteins into the membrane. Involved in integration of membrane proteins that insert both dependently and independently of the Sec translocase complex, as well as at least some lipoproteins. Aids folding of multispanning membrane proteins.</text>
</comment>
<comment type="subunit">
    <text evidence="1">Interacts with the Sec translocase complex via SecD. Specifically interacts with transmembrane segments of nascent integral membrane proteins during membrane integration.</text>
</comment>
<comment type="subcellular location">
    <subcellularLocation>
        <location evidence="1">Cell inner membrane</location>
        <topology evidence="1">Multi-pass membrane protein</topology>
    </subcellularLocation>
</comment>
<comment type="similarity">
    <text evidence="1">Belongs to the OXA1/ALB3/YidC family. Type 1 subfamily.</text>
</comment>
<evidence type="ECO:0000255" key="1">
    <source>
        <dbReference type="HAMAP-Rule" id="MF_01810"/>
    </source>
</evidence>
<evidence type="ECO:0000256" key="2">
    <source>
        <dbReference type="SAM" id="MobiDB-lite"/>
    </source>
</evidence>
<feature type="chain" id="PRO_0000124693" description="Membrane protein insertase YidC">
    <location>
        <begin position="1"/>
        <end position="616"/>
    </location>
</feature>
<feature type="transmembrane region" description="Helical" evidence="1">
    <location>
        <begin position="9"/>
        <end position="29"/>
    </location>
</feature>
<feature type="transmembrane region" description="Helical" evidence="1">
    <location>
        <begin position="388"/>
        <end position="408"/>
    </location>
</feature>
<feature type="transmembrane region" description="Helical" evidence="1">
    <location>
        <begin position="462"/>
        <end position="482"/>
    </location>
</feature>
<feature type="transmembrane region" description="Helical" evidence="1">
    <location>
        <begin position="520"/>
        <end position="540"/>
    </location>
</feature>
<feature type="transmembrane region" description="Helical" evidence="1">
    <location>
        <begin position="559"/>
        <end position="579"/>
    </location>
</feature>
<feature type="region of interest" description="Disordered" evidence="2">
    <location>
        <begin position="37"/>
        <end position="80"/>
    </location>
</feature>
<feature type="compositionally biased region" description="Polar residues" evidence="2">
    <location>
        <begin position="44"/>
        <end position="71"/>
    </location>
</feature>
<accession>Q89BQ0</accession>
<name>YIDC_BRADU</name>
<reference key="1">
    <citation type="journal article" date="2002" name="DNA Res.">
        <title>Complete genomic sequence of nitrogen-fixing symbiotic bacterium Bradyrhizobium japonicum USDA110.</title>
        <authorList>
            <person name="Kaneko T."/>
            <person name="Nakamura Y."/>
            <person name="Sato S."/>
            <person name="Minamisawa K."/>
            <person name="Uchiumi T."/>
            <person name="Sasamoto S."/>
            <person name="Watanabe A."/>
            <person name="Idesawa K."/>
            <person name="Iriguchi M."/>
            <person name="Kawashima K."/>
            <person name="Kohara M."/>
            <person name="Matsumoto M."/>
            <person name="Shimpo S."/>
            <person name="Tsuruoka H."/>
            <person name="Wada T."/>
            <person name="Yamada M."/>
            <person name="Tabata S."/>
        </authorList>
    </citation>
    <scope>NUCLEOTIDE SEQUENCE [LARGE SCALE GENOMIC DNA]</scope>
    <source>
        <strain>JCM 10833 / BCRC 13528 / IAM 13628 / NBRC 14792 / USDA 110</strain>
    </source>
</reference>
<protein>
    <recommendedName>
        <fullName evidence="1">Membrane protein insertase YidC</fullName>
    </recommendedName>
    <alternativeName>
        <fullName evidence="1">Foldase YidC</fullName>
    </alternativeName>
    <alternativeName>
        <fullName evidence="1">Membrane integrase YidC</fullName>
    </alternativeName>
    <alternativeName>
        <fullName evidence="1">Membrane protein YidC</fullName>
    </alternativeName>
</protein>
<organism>
    <name type="scientific">Bradyrhizobium diazoefficiens (strain JCM 10833 / BCRC 13528 / IAM 13628 / NBRC 14792 / USDA 110)</name>
    <dbReference type="NCBI Taxonomy" id="224911"/>
    <lineage>
        <taxon>Bacteria</taxon>
        <taxon>Pseudomonadati</taxon>
        <taxon>Pseudomonadota</taxon>
        <taxon>Alphaproteobacteria</taxon>
        <taxon>Hyphomicrobiales</taxon>
        <taxon>Nitrobacteraceae</taxon>
        <taxon>Bradyrhizobium</taxon>
    </lineage>
</organism>
<keyword id="KW-0997">Cell inner membrane</keyword>
<keyword id="KW-1003">Cell membrane</keyword>
<keyword id="KW-0143">Chaperone</keyword>
<keyword id="KW-0472">Membrane</keyword>
<keyword id="KW-0653">Protein transport</keyword>
<keyword id="KW-1185">Reference proteome</keyword>
<keyword id="KW-0812">Transmembrane</keyword>
<keyword id="KW-1133">Transmembrane helix</keyword>
<keyword id="KW-0813">Transport</keyword>
<sequence length="616" mass="68322">MMTDNRNTILAVILSGLVLIAWQYFYNVPAMEKQRAQQQAQAELQKTTPQPTASATPGATPQSGGAAQPSTPAAGQQAQPVVARDAAIAASPRVKIDTPRIAGSISLKGGRIDDVALVQYRETVDPKSPPIVLYSPSGTAEPYYAEFGWVPATGVTAKLPDAQTLWQQDGSGSLTPTTPAVLKWDNGEGLTFRRTISVDDHYLFTIKDEVSNVGNAPVTLYPFALISRHGTPQVSGYYILHEGLIGYLDGLQEYAYKKIDEAKSVNFKATNGWLGMTDKYWASALLPDTSAQLQARFSSNPVGNVHTYQTDYLLDPVTVAIGGSATANARLFAGAKEAGVVGINFPLAGHGGYNKELNLNHFDLLIDWGWFYFITKPMFLGLDFFYRFFGNFGISILLVTVIVKLLFFPLANKSYASMAKMKSIQPQLQALKERYPDDKVKQQQEMMEIYRKEKINPVAGCLPVVIQIPVFFSLYKVLFVTIEMRQAPFYGWIKDLSAPDPTNLFNLFGLIPLDPTTIPVFGHYLALGIWPIIMGITMWFQMKLNPTPPDPTQQMIFNWMPLIFTFMLAGFPAGLVIYWAWNNTLSVLQQSFIMRRNGVKVELFDNLKATFARKAT</sequence>
<gene>
    <name evidence="1" type="primary">yidC</name>
    <name type="ordered locus">blr8098</name>
</gene>